<reference key="1">
    <citation type="journal article" date="2007" name="PLoS ONE">
        <title>Paradoxical DNA repair and peroxide resistance gene conservation in Bacillus pumilus SAFR-032.</title>
        <authorList>
            <person name="Gioia J."/>
            <person name="Yerrapragada S."/>
            <person name="Qin X."/>
            <person name="Jiang H."/>
            <person name="Igboeli O.C."/>
            <person name="Muzny D."/>
            <person name="Dugan-Rocha S."/>
            <person name="Ding Y."/>
            <person name="Hawes A."/>
            <person name="Liu W."/>
            <person name="Perez L."/>
            <person name="Kovar C."/>
            <person name="Dinh H."/>
            <person name="Lee S."/>
            <person name="Nazareth L."/>
            <person name="Blyth P."/>
            <person name="Holder M."/>
            <person name="Buhay C."/>
            <person name="Tirumalai M.R."/>
            <person name="Liu Y."/>
            <person name="Dasgupta I."/>
            <person name="Bokhetache L."/>
            <person name="Fujita M."/>
            <person name="Karouia F."/>
            <person name="Eswara Moorthy P."/>
            <person name="Siefert J."/>
            <person name="Uzman A."/>
            <person name="Buzumbo P."/>
            <person name="Verma A."/>
            <person name="Zwiya H."/>
            <person name="McWilliams B.D."/>
            <person name="Olowu A."/>
            <person name="Clinkenbeard K.D."/>
            <person name="Newcombe D."/>
            <person name="Golebiewski L."/>
            <person name="Petrosino J.F."/>
            <person name="Nicholson W.L."/>
            <person name="Fox G.E."/>
            <person name="Venkateswaran K."/>
            <person name="Highlander S.K."/>
            <person name="Weinstock G.M."/>
        </authorList>
    </citation>
    <scope>NUCLEOTIDE SEQUENCE [LARGE SCALE GENOMIC DNA]</scope>
    <source>
        <strain>SAFR-032</strain>
    </source>
</reference>
<protein>
    <recommendedName>
        <fullName evidence="1">ATP synthase subunit b</fullName>
    </recommendedName>
    <alternativeName>
        <fullName evidence="1">ATP synthase F(0) sector subunit b</fullName>
    </alternativeName>
    <alternativeName>
        <fullName evidence="1">ATPase subunit I</fullName>
    </alternativeName>
    <alternativeName>
        <fullName evidence="1">F-type ATPase subunit b</fullName>
        <shortName evidence="1">F-ATPase subunit b</shortName>
    </alternativeName>
</protein>
<gene>
    <name evidence="1" type="primary">atpF</name>
    <name type="ordered locus">BPUM_3330</name>
</gene>
<proteinExistence type="inferred from homology"/>
<evidence type="ECO:0000255" key="1">
    <source>
        <dbReference type="HAMAP-Rule" id="MF_01398"/>
    </source>
</evidence>
<accession>A8FIB6</accession>
<comment type="function">
    <text evidence="1">F(1)F(0) ATP synthase produces ATP from ADP in the presence of a proton or sodium gradient. F-type ATPases consist of two structural domains, F(1) containing the extramembraneous catalytic core and F(0) containing the membrane proton channel, linked together by a central stalk and a peripheral stalk. During catalysis, ATP synthesis in the catalytic domain of F(1) is coupled via a rotary mechanism of the central stalk subunits to proton translocation.</text>
</comment>
<comment type="function">
    <text evidence="1">Component of the F(0) channel, it forms part of the peripheral stalk, linking F(1) to F(0).</text>
</comment>
<comment type="subunit">
    <text evidence="1">F-type ATPases have 2 components, F(1) - the catalytic core - and F(0) - the membrane proton channel. F(1) has five subunits: alpha(3), beta(3), gamma(1), delta(1), epsilon(1). F(0) has three main subunits: a(1), b(2) and c(10-14). The alpha and beta chains form an alternating ring which encloses part of the gamma chain. F(1) is attached to F(0) by a central stalk formed by the gamma and epsilon chains, while a peripheral stalk is formed by the delta and b chains.</text>
</comment>
<comment type="subcellular location">
    <subcellularLocation>
        <location evidence="1">Cell membrane</location>
        <topology evidence="1">Single-pass membrane protein</topology>
    </subcellularLocation>
</comment>
<comment type="similarity">
    <text evidence="1">Belongs to the ATPase B chain family.</text>
</comment>
<keyword id="KW-0066">ATP synthesis</keyword>
<keyword id="KW-1003">Cell membrane</keyword>
<keyword id="KW-0138">CF(0)</keyword>
<keyword id="KW-0375">Hydrogen ion transport</keyword>
<keyword id="KW-0406">Ion transport</keyword>
<keyword id="KW-0472">Membrane</keyword>
<keyword id="KW-0812">Transmembrane</keyword>
<keyword id="KW-1133">Transmembrane helix</keyword>
<keyword id="KW-0813">Transport</keyword>
<name>ATPF_BACP2</name>
<sequence>MSQLPVVLGAGLNTGDIIFQLIAMLILLALLKKFALKPLLGIMKQREDYIGNEISSAEQKHVQAEKLLEEQRVLLKEAREESHTLIENAKKIGEKQKEEIIQAARQESERLKDSARTEIVKEKEQAVAALREQVASLSVLIASKVIERELDEQAQEKLIQEYLKEAGESR</sequence>
<dbReference type="EMBL" id="CP000813">
    <property type="protein sequence ID" value="ABV63983.1"/>
    <property type="molecule type" value="Genomic_DNA"/>
</dbReference>
<dbReference type="RefSeq" id="WP_012011550.1">
    <property type="nucleotide sequence ID" value="NZ_VEIS01000002.1"/>
</dbReference>
<dbReference type="SMR" id="A8FIB6"/>
<dbReference type="STRING" id="315750.BPUM_3330"/>
<dbReference type="GeneID" id="5622620"/>
<dbReference type="KEGG" id="bpu:BPUM_3330"/>
<dbReference type="eggNOG" id="COG0711">
    <property type="taxonomic scope" value="Bacteria"/>
</dbReference>
<dbReference type="HOGENOM" id="CLU_079215_4_2_9"/>
<dbReference type="OrthoDB" id="282095at2"/>
<dbReference type="Proteomes" id="UP000001355">
    <property type="component" value="Chromosome"/>
</dbReference>
<dbReference type="GO" id="GO:0005886">
    <property type="term" value="C:plasma membrane"/>
    <property type="evidence" value="ECO:0007669"/>
    <property type="project" value="UniProtKB-SubCell"/>
</dbReference>
<dbReference type="GO" id="GO:0045259">
    <property type="term" value="C:proton-transporting ATP synthase complex"/>
    <property type="evidence" value="ECO:0007669"/>
    <property type="project" value="UniProtKB-KW"/>
</dbReference>
<dbReference type="GO" id="GO:0046933">
    <property type="term" value="F:proton-transporting ATP synthase activity, rotational mechanism"/>
    <property type="evidence" value="ECO:0007669"/>
    <property type="project" value="UniProtKB-UniRule"/>
</dbReference>
<dbReference type="GO" id="GO:0046961">
    <property type="term" value="F:proton-transporting ATPase activity, rotational mechanism"/>
    <property type="evidence" value="ECO:0007669"/>
    <property type="project" value="TreeGrafter"/>
</dbReference>
<dbReference type="CDD" id="cd06503">
    <property type="entry name" value="ATP-synt_Fo_b"/>
    <property type="match status" value="1"/>
</dbReference>
<dbReference type="Gene3D" id="1.20.5.620">
    <property type="entry name" value="F1F0 ATP synthase subunit B, membrane domain"/>
    <property type="match status" value="1"/>
</dbReference>
<dbReference type="HAMAP" id="MF_01398">
    <property type="entry name" value="ATP_synth_b_bprime"/>
    <property type="match status" value="1"/>
</dbReference>
<dbReference type="InterPro" id="IPR028987">
    <property type="entry name" value="ATP_synth_B-like_membr_sf"/>
</dbReference>
<dbReference type="InterPro" id="IPR002146">
    <property type="entry name" value="ATP_synth_b/b'su_bac/chlpt"/>
</dbReference>
<dbReference type="InterPro" id="IPR005864">
    <property type="entry name" value="ATP_synth_F0_bsu_bac"/>
</dbReference>
<dbReference type="InterPro" id="IPR050059">
    <property type="entry name" value="ATP_synthase_B_chain"/>
</dbReference>
<dbReference type="NCBIfam" id="TIGR01144">
    <property type="entry name" value="ATP_synt_b"/>
    <property type="match status" value="1"/>
</dbReference>
<dbReference type="PANTHER" id="PTHR33445:SF1">
    <property type="entry name" value="ATP SYNTHASE SUBUNIT B"/>
    <property type="match status" value="1"/>
</dbReference>
<dbReference type="PANTHER" id="PTHR33445">
    <property type="entry name" value="ATP SYNTHASE SUBUNIT B', CHLOROPLASTIC"/>
    <property type="match status" value="1"/>
</dbReference>
<dbReference type="Pfam" id="PF00430">
    <property type="entry name" value="ATP-synt_B"/>
    <property type="match status" value="1"/>
</dbReference>
<dbReference type="SUPFAM" id="SSF81573">
    <property type="entry name" value="F1F0 ATP synthase subunit B, membrane domain"/>
    <property type="match status" value="1"/>
</dbReference>
<organism>
    <name type="scientific">Bacillus pumilus (strain SAFR-032)</name>
    <dbReference type="NCBI Taxonomy" id="315750"/>
    <lineage>
        <taxon>Bacteria</taxon>
        <taxon>Bacillati</taxon>
        <taxon>Bacillota</taxon>
        <taxon>Bacilli</taxon>
        <taxon>Bacillales</taxon>
        <taxon>Bacillaceae</taxon>
        <taxon>Bacillus</taxon>
    </lineage>
</organism>
<feature type="chain" id="PRO_0000368333" description="ATP synthase subunit b">
    <location>
        <begin position="1"/>
        <end position="170"/>
    </location>
</feature>
<feature type="transmembrane region" description="Helical" evidence="1">
    <location>
        <begin position="11"/>
        <end position="31"/>
    </location>
</feature>